<comment type="function">
    <text evidence="1">Catalyzes the synthesis of N-((2S)-2-amino-2-carboxyethyl)-L-glutamate (ACEGA) from O-phospho-L-serine and L-glutamate. Involved in the biosynthesis of L-2,3-diaminopropionic acid (L-Dap), a precursor of staphyloferrin B and antibiotics.</text>
</comment>
<comment type="catalytic activity">
    <reaction evidence="1">
        <text>O-phospho-L-serine + L-glutamate = N-[(2S)-2-amino-2-carboxyethyl]-L-glutamate + phosphate + H(+)</text>
        <dbReference type="Rhea" id="RHEA:52384"/>
        <dbReference type="ChEBI" id="CHEBI:15378"/>
        <dbReference type="ChEBI" id="CHEBI:29985"/>
        <dbReference type="ChEBI" id="CHEBI:43474"/>
        <dbReference type="ChEBI" id="CHEBI:57524"/>
        <dbReference type="ChEBI" id="CHEBI:134610"/>
        <dbReference type="EC" id="2.5.1.140"/>
    </reaction>
</comment>
<comment type="cofactor">
    <cofactor evidence="1">
        <name>pyridoxal 5'-phosphate</name>
        <dbReference type="ChEBI" id="CHEBI:597326"/>
    </cofactor>
</comment>
<comment type="pathway">
    <text evidence="1">Siderophore biosynthesis.</text>
</comment>
<comment type="subunit">
    <text evidence="1">Homodimer.</text>
</comment>
<comment type="induction">
    <text evidence="2">Up-regulated under iron-deficient growth conditions. Repressed by Fur under iron-rich growth conditions.</text>
</comment>
<comment type="similarity">
    <text evidence="3">Belongs to the cysteine synthase/cystathionine beta-synthase family. SbnA subfamily.</text>
</comment>
<name>SBNA_STAA4</name>
<feature type="chain" id="PRO_0000395010" description="N-(2-amino-2-carboxyethyl)-L-glutamate synthase">
    <location>
        <begin position="1"/>
        <end position="326"/>
    </location>
</feature>
<feature type="binding site" evidence="1">
    <location>
        <position position="77"/>
    </location>
    <ligand>
        <name>pyridoxal 5'-phosphate</name>
        <dbReference type="ChEBI" id="CHEBI:597326"/>
    </ligand>
</feature>
<feature type="binding site" evidence="1">
    <location>
        <begin position="185"/>
        <end position="189"/>
    </location>
    <ligand>
        <name>pyridoxal 5'-phosphate</name>
        <dbReference type="ChEBI" id="CHEBI:597326"/>
    </ligand>
</feature>
<feature type="binding site" evidence="1">
    <location>
        <position position="272"/>
    </location>
    <ligand>
        <name>pyridoxal 5'-phosphate</name>
        <dbReference type="ChEBI" id="CHEBI:597326"/>
    </ligand>
</feature>
<feature type="modified residue" description="N6-(pyridoxal phosphate)lysine" evidence="1">
    <location>
        <position position="47"/>
    </location>
</feature>
<gene>
    <name type="primary">sbnA</name>
    <name type="ordered locus">SA2981_0117</name>
</gene>
<sequence>MIEKSQACHDSLLDSVGQTPMVQLHQLFPKHEVFAKLEYMNPGGSMKDRPAKYIIEHGIKHGLITENTHLIESTSGNLGIALAMIAKIKGLKLTCVVDPKISPTNLKIIKSYGANVEMVEEPDAHGGYLMTRIAKVQELLATIDDAYWINQYANELNWQSHYHGAGTEIVETIKQPIDYFVAPVSTTGSIMGMSRKIKEVHPNAQIVAVDAKGSVIFGDKPINRELPGIGASRVPEILNRSEINQVIHVDDYQSALGCRKLIDYEGIFAGGSTGSIIAAIEQLITSIEEGATIVTILPDRGDRYLDLVYSDTWLEKMKSRQGVKSE</sequence>
<dbReference type="EC" id="2.5.1.140" evidence="1"/>
<dbReference type="EMBL" id="CP001844">
    <property type="protein sequence ID" value="ADC36328.1"/>
    <property type="molecule type" value="Genomic_DNA"/>
</dbReference>
<dbReference type="RefSeq" id="WP_000570808.1">
    <property type="nucleotide sequence ID" value="NC_017340.1"/>
</dbReference>
<dbReference type="SMR" id="D3ERF5"/>
<dbReference type="KEGG" id="suy:SA2981_0117"/>
<dbReference type="PATRIC" id="fig|703339.3.peg.117"/>
<dbReference type="HOGENOM" id="CLU_021018_1_0_9"/>
<dbReference type="GO" id="GO:0016765">
    <property type="term" value="F:transferase activity, transferring alkyl or aryl (other than methyl) groups"/>
    <property type="evidence" value="ECO:0007669"/>
    <property type="project" value="UniProtKB-ARBA"/>
</dbReference>
<dbReference type="GO" id="GO:0006535">
    <property type="term" value="P:cysteine biosynthetic process from serine"/>
    <property type="evidence" value="ECO:0007669"/>
    <property type="project" value="InterPro"/>
</dbReference>
<dbReference type="CDD" id="cd01561">
    <property type="entry name" value="CBS_like"/>
    <property type="match status" value="1"/>
</dbReference>
<dbReference type="Gene3D" id="3.40.50.1100">
    <property type="match status" value="2"/>
</dbReference>
<dbReference type="InterPro" id="IPR050214">
    <property type="entry name" value="Cys_Synth/Cystath_Beta-Synth"/>
</dbReference>
<dbReference type="InterPro" id="IPR001216">
    <property type="entry name" value="P-phosphate_BS"/>
</dbReference>
<dbReference type="InterPro" id="IPR023927">
    <property type="entry name" value="SbnA"/>
</dbReference>
<dbReference type="InterPro" id="IPR001926">
    <property type="entry name" value="TrpB-like_PALP"/>
</dbReference>
<dbReference type="InterPro" id="IPR036052">
    <property type="entry name" value="TrpB-like_PALP_sf"/>
</dbReference>
<dbReference type="NCBIfam" id="TIGR03945">
    <property type="entry name" value="PLP_SbnA_fam"/>
    <property type="match status" value="1"/>
</dbReference>
<dbReference type="PANTHER" id="PTHR10314">
    <property type="entry name" value="CYSTATHIONINE BETA-SYNTHASE"/>
    <property type="match status" value="1"/>
</dbReference>
<dbReference type="Pfam" id="PF00291">
    <property type="entry name" value="PALP"/>
    <property type="match status" value="1"/>
</dbReference>
<dbReference type="SUPFAM" id="SSF53686">
    <property type="entry name" value="Tryptophan synthase beta subunit-like PLP-dependent enzymes"/>
    <property type="match status" value="1"/>
</dbReference>
<dbReference type="PROSITE" id="PS00901">
    <property type="entry name" value="CYS_SYNTHASE"/>
    <property type="match status" value="1"/>
</dbReference>
<reference key="1">
    <citation type="journal article" date="2010" name="PLoS Pathog.">
        <title>A timescale for evolution, population expansion, and spatial spread of an emerging clone of methicillin-resistant Staphylococcus aureus.</title>
        <authorList>
            <person name="Nubel U."/>
            <person name="Dordel J."/>
            <person name="Kurt K."/>
            <person name="Strommenger B."/>
            <person name="Westh H."/>
            <person name="Shukla S.K."/>
            <person name="Zemlickova H."/>
            <person name="Leblois R."/>
            <person name="Wirth T."/>
            <person name="Jombart T."/>
            <person name="Balloux F."/>
            <person name="Witte W."/>
        </authorList>
    </citation>
    <scope>NUCLEOTIDE SEQUENCE [LARGE SCALE GENOMIC DNA]</scope>
    <source>
        <strain>04-02981</strain>
    </source>
</reference>
<accession>D3ERF5</accession>
<organism>
    <name type="scientific">Staphylococcus aureus (strain 04-02981)</name>
    <dbReference type="NCBI Taxonomy" id="703339"/>
    <lineage>
        <taxon>Bacteria</taxon>
        <taxon>Bacillati</taxon>
        <taxon>Bacillota</taxon>
        <taxon>Bacilli</taxon>
        <taxon>Bacillales</taxon>
        <taxon>Staphylococcaceae</taxon>
        <taxon>Staphylococcus</taxon>
    </lineage>
</organism>
<evidence type="ECO:0000250" key="1">
    <source>
        <dbReference type="UniProtKB" id="A6QDA0"/>
    </source>
</evidence>
<evidence type="ECO:0000250" key="2">
    <source>
        <dbReference type="UniProtKB" id="Q2G1N3"/>
    </source>
</evidence>
<evidence type="ECO:0000305" key="3"/>
<protein>
    <recommendedName>
        <fullName evidence="3">N-(2-amino-2-carboxyethyl)-L-glutamate synthase</fullName>
        <shortName evidence="3">ACEGA synthase</shortName>
        <ecNumber evidence="1">2.5.1.140</ecNumber>
    </recommendedName>
</protein>
<proteinExistence type="inferred from homology"/>
<keyword id="KW-0663">Pyridoxal phosphate</keyword>
<keyword id="KW-0808">Transferase</keyword>